<organism>
    <name type="scientific">Dehalococcoides mccartyi (strain CBDB1)</name>
    <dbReference type="NCBI Taxonomy" id="255470"/>
    <lineage>
        <taxon>Bacteria</taxon>
        <taxon>Bacillati</taxon>
        <taxon>Chloroflexota</taxon>
        <taxon>Dehalococcoidia</taxon>
        <taxon>Dehalococcoidales</taxon>
        <taxon>Dehalococcoidaceae</taxon>
        <taxon>Dehalococcoides</taxon>
    </lineage>
</organism>
<name>RL25_DEHMC</name>
<proteinExistence type="inferred from homology"/>
<sequence length="218" mass="24286">MTGISLALKPRQVFGNKNKLIRAQGLTPVHIFGHGLKSLALQADTLELESTINRAGSSHLVNIKLDTDKKTRKVFIREIQRNPIKGYLEHVDFYQINLKEKVTAEIPIHFSGESSLLKEKGHKLIAPFTHLTVEALPDDLPPEIHIDLSQFDTLEKDLYIKDIILPGGAKILNEADLLVAKVSEVHLKVETTVAVNPAEESGEKPVAHIEEKESTEKE</sequence>
<feature type="chain" id="PRO_0000244207" description="Large ribosomal subunit protein bL25">
    <location>
        <begin position="1"/>
        <end position="218"/>
    </location>
</feature>
<feature type="region of interest" description="Disordered" evidence="2">
    <location>
        <begin position="197"/>
        <end position="218"/>
    </location>
</feature>
<feature type="compositionally biased region" description="Basic and acidic residues" evidence="2">
    <location>
        <begin position="201"/>
        <end position="218"/>
    </location>
</feature>
<keyword id="KW-0687">Ribonucleoprotein</keyword>
<keyword id="KW-0689">Ribosomal protein</keyword>
<keyword id="KW-0694">RNA-binding</keyword>
<keyword id="KW-0699">rRNA-binding</keyword>
<comment type="function">
    <text evidence="1">This is one of the proteins that binds to the 5S RNA in the ribosome where it forms part of the central protuberance.</text>
</comment>
<comment type="subunit">
    <text evidence="1">Part of the 50S ribosomal subunit; part of the 5S rRNA/L5/L18/L25 subcomplex. Contacts the 5S rRNA. Binds to the 5S rRNA independently of L5 and L18.</text>
</comment>
<comment type="similarity">
    <text evidence="1">Belongs to the bacterial ribosomal protein bL25 family. CTC subfamily.</text>
</comment>
<gene>
    <name evidence="1" type="primary">rplY</name>
    <name evidence="1" type="synonym">ctc</name>
    <name type="ordered locus">cbdbA1419</name>
</gene>
<protein>
    <recommendedName>
        <fullName evidence="1">Large ribosomal subunit protein bL25</fullName>
    </recommendedName>
    <alternativeName>
        <fullName evidence="3">50S ribosomal protein L25</fullName>
    </alternativeName>
    <alternativeName>
        <fullName evidence="1">General stress protein CTC</fullName>
    </alternativeName>
</protein>
<evidence type="ECO:0000255" key="1">
    <source>
        <dbReference type="HAMAP-Rule" id="MF_01334"/>
    </source>
</evidence>
<evidence type="ECO:0000256" key="2">
    <source>
        <dbReference type="SAM" id="MobiDB-lite"/>
    </source>
</evidence>
<evidence type="ECO:0000305" key="3"/>
<reference key="1">
    <citation type="journal article" date="2005" name="Nat. Biotechnol.">
        <title>Genome sequence of the chlorinated compound-respiring bacterium Dehalococcoides species strain CBDB1.</title>
        <authorList>
            <person name="Kube M."/>
            <person name="Beck A."/>
            <person name="Zinder S.H."/>
            <person name="Kuhl H."/>
            <person name="Reinhardt R."/>
            <person name="Adrian L."/>
        </authorList>
    </citation>
    <scope>NUCLEOTIDE SEQUENCE [LARGE SCALE GENOMIC DNA]</scope>
    <source>
        <strain>CBDB1</strain>
    </source>
</reference>
<dbReference type="EMBL" id="AJ965256">
    <property type="protein sequence ID" value="CAI83455.1"/>
    <property type="molecule type" value="Genomic_DNA"/>
</dbReference>
<dbReference type="RefSeq" id="WP_011309806.1">
    <property type="nucleotide sequence ID" value="NC_007356.1"/>
</dbReference>
<dbReference type="SMR" id="Q3ZYZ2"/>
<dbReference type="KEGG" id="deh:cbdbA1419"/>
<dbReference type="HOGENOM" id="CLU_075939_2_0_0"/>
<dbReference type="Proteomes" id="UP000000433">
    <property type="component" value="Chromosome"/>
</dbReference>
<dbReference type="GO" id="GO:0022625">
    <property type="term" value="C:cytosolic large ribosomal subunit"/>
    <property type="evidence" value="ECO:0007669"/>
    <property type="project" value="TreeGrafter"/>
</dbReference>
<dbReference type="GO" id="GO:0008097">
    <property type="term" value="F:5S rRNA binding"/>
    <property type="evidence" value="ECO:0007669"/>
    <property type="project" value="InterPro"/>
</dbReference>
<dbReference type="GO" id="GO:0003735">
    <property type="term" value="F:structural constituent of ribosome"/>
    <property type="evidence" value="ECO:0007669"/>
    <property type="project" value="InterPro"/>
</dbReference>
<dbReference type="GO" id="GO:0006412">
    <property type="term" value="P:translation"/>
    <property type="evidence" value="ECO:0007669"/>
    <property type="project" value="UniProtKB-UniRule"/>
</dbReference>
<dbReference type="CDD" id="cd00495">
    <property type="entry name" value="Ribosomal_L25_TL5_CTC"/>
    <property type="match status" value="1"/>
</dbReference>
<dbReference type="Gene3D" id="2.170.120.20">
    <property type="entry name" value="Ribosomal protein L25, beta domain"/>
    <property type="match status" value="1"/>
</dbReference>
<dbReference type="Gene3D" id="2.40.240.10">
    <property type="entry name" value="Ribosomal Protein L25, Chain P"/>
    <property type="match status" value="1"/>
</dbReference>
<dbReference type="HAMAP" id="MF_01334">
    <property type="entry name" value="Ribosomal_bL25_CTC"/>
    <property type="match status" value="1"/>
</dbReference>
<dbReference type="InterPro" id="IPR020056">
    <property type="entry name" value="Rbsml_bL25/Gln-tRNA_synth_N"/>
</dbReference>
<dbReference type="InterPro" id="IPR011035">
    <property type="entry name" value="Ribosomal_bL25/Gln-tRNA_synth"/>
</dbReference>
<dbReference type="InterPro" id="IPR020057">
    <property type="entry name" value="Ribosomal_bL25_b-dom"/>
</dbReference>
<dbReference type="InterPro" id="IPR037121">
    <property type="entry name" value="Ribosomal_bL25_C"/>
</dbReference>
<dbReference type="InterPro" id="IPR001021">
    <property type="entry name" value="Ribosomal_bL25_long"/>
</dbReference>
<dbReference type="InterPro" id="IPR029751">
    <property type="entry name" value="Ribosomal_L25_dom"/>
</dbReference>
<dbReference type="InterPro" id="IPR020930">
    <property type="entry name" value="Ribosomal_uL5_bac-type"/>
</dbReference>
<dbReference type="NCBIfam" id="TIGR00731">
    <property type="entry name" value="bL25_bact_ctc"/>
    <property type="match status" value="1"/>
</dbReference>
<dbReference type="NCBIfam" id="NF004133">
    <property type="entry name" value="PRK05618.2-4"/>
    <property type="match status" value="1"/>
</dbReference>
<dbReference type="PANTHER" id="PTHR33284">
    <property type="entry name" value="RIBOSOMAL PROTEIN L25/GLN-TRNA SYNTHETASE, ANTI-CODON-BINDING DOMAIN-CONTAINING PROTEIN"/>
    <property type="match status" value="1"/>
</dbReference>
<dbReference type="PANTHER" id="PTHR33284:SF1">
    <property type="entry name" value="RIBOSOMAL PROTEIN L25_GLN-TRNA SYNTHETASE, ANTI-CODON-BINDING DOMAIN-CONTAINING PROTEIN"/>
    <property type="match status" value="1"/>
</dbReference>
<dbReference type="Pfam" id="PF01386">
    <property type="entry name" value="Ribosomal_L25p"/>
    <property type="match status" value="1"/>
</dbReference>
<dbReference type="Pfam" id="PF14693">
    <property type="entry name" value="Ribosomal_TL5_C"/>
    <property type="match status" value="1"/>
</dbReference>
<dbReference type="SUPFAM" id="SSF50715">
    <property type="entry name" value="Ribosomal protein L25-like"/>
    <property type="match status" value="1"/>
</dbReference>
<accession>Q3ZYZ2</accession>